<dbReference type="EC" id="6.2.1.1" evidence="1"/>
<dbReference type="EMBL" id="CP000547">
    <property type="protein sequence ID" value="ABO03882.1"/>
    <property type="molecule type" value="Genomic_DNA"/>
</dbReference>
<dbReference type="SMR" id="A3MG40"/>
<dbReference type="KEGG" id="bmaz:BM44_3949"/>
<dbReference type="KEGG" id="bmn:BMA10247_A2054"/>
<dbReference type="PATRIC" id="fig|320389.8.peg.4495"/>
<dbReference type="GO" id="GO:0005829">
    <property type="term" value="C:cytosol"/>
    <property type="evidence" value="ECO:0007669"/>
    <property type="project" value="TreeGrafter"/>
</dbReference>
<dbReference type="GO" id="GO:0003987">
    <property type="term" value="F:acetate-CoA ligase activity"/>
    <property type="evidence" value="ECO:0007669"/>
    <property type="project" value="UniProtKB-UniRule"/>
</dbReference>
<dbReference type="GO" id="GO:0016208">
    <property type="term" value="F:AMP binding"/>
    <property type="evidence" value="ECO:0007669"/>
    <property type="project" value="InterPro"/>
</dbReference>
<dbReference type="GO" id="GO:0005524">
    <property type="term" value="F:ATP binding"/>
    <property type="evidence" value="ECO:0007669"/>
    <property type="project" value="UniProtKB-KW"/>
</dbReference>
<dbReference type="GO" id="GO:0046872">
    <property type="term" value="F:metal ion binding"/>
    <property type="evidence" value="ECO:0007669"/>
    <property type="project" value="UniProtKB-KW"/>
</dbReference>
<dbReference type="GO" id="GO:0019427">
    <property type="term" value="P:acetyl-CoA biosynthetic process from acetate"/>
    <property type="evidence" value="ECO:0007669"/>
    <property type="project" value="InterPro"/>
</dbReference>
<dbReference type="CDD" id="cd05966">
    <property type="entry name" value="ACS"/>
    <property type="match status" value="1"/>
</dbReference>
<dbReference type="FunFam" id="3.40.50.12780:FF:000001">
    <property type="entry name" value="Acetyl-coenzyme A synthetase"/>
    <property type="match status" value="1"/>
</dbReference>
<dbReference type="Gene3D" id="3.30.300.30">
    <property type="match status" value="1"/>
</dbReference>
<dbReference type="Gene3D" id="3.40.50.12780">
    <property type="entry name" value="N-terminal domain of ligase-like"/>
    <property type="match status" value="1"/>
</dbReference>
<dbReference type="HAMAP" id="MF_01123">
    <property type="entry name" value="Ac_CoA_synth"/>
    <property type="match status" value="1"/>
</dbReference>
<dbReference type="InterPro" id="IPR011904">
    <property type="entry name" value="Ac_CoA_lig"/>
</dbReference>
<dbReference type="InterPro" id="IPR032387">
    <property type="entry name" value="ACAS_N"/>
</dbReference>
<dbReference type="InterPro" id="IPR025110">
    <property type="entry name" value="AMP-bd_C"/>
</dbReference>
<dbReference type="InterPro" id="IPR045851">
    <property type="entry name" value="AMP-bd_C_sf"/>
</dbReference>
<dbReference type="InterPro" id="IPR020845">
    <property type="entry name" value="AMP-binding_CS"/>
</dbReference>
<dbReference type="InterPro" id="IPR000873">
    <property type="entry name" value="AMP-dep_synth/lig_dom"/>
</dbReference>
<dbReference type="InterPro" id="IPR042099">
    <property type="entry name" value="ANL_N_sf"/>
</dbReference>
<dbReference type="NCBIfam" id="TIGR02188">
    <property type="entry name" value="Ac_CoA_lig_AcsA"/>
    <property type="match status" value="1"/>
</dbReference>
<dbReference type="NCBIfam" id="NF001208">
    <property type="entry name" value="PRK00174.1"/>
    <property type="match status" value="1"/>
</dbReference>
<dbReference type="PANTHER" id="PTHR24095">
    <property type="entry name" value="ACETYL-COENZYME A SYNTHETASE"/>
    <property type="match status" value="1"/>
</dbReference>
<dbReference type="PANTHER" id="PTHR24095:SF14">
    <property type="entry name" value="ACETYL-COENZYME A SYNTHETASE 1"/>
    <property type="match status" value="1"/>
</dbReference>
<dbReference type="Pfam" id="PF16177">
    <property type="entry name" value="ACAS_N"/>
    <property type="match status" value="1"/>
</dbReference>
<dbReference type="Pfam" id="PF00501">
    <property type="entry name" value="AMP-binding"/>
    <property type="match status" value="1"/>
</dbReference>
<dbReference type="Pfam" id="PF13193">
    <property type="entry name" value="AMP-binding_C"/>
    <property type="match status" value="1"/>
</dbReference>
<dbReference type="SUPFAM" id="SSF56801">
    <property type="entry name" value="Acetyl-CoA synthetase-like"/>
    <property type="match status" value="1"/>
</dbReference>
<dbReference type="PROSITE" id="PS00455">
    <property type="entry name" value="AMP_BINDING"/>
    <property type="match status" value="1"/>
</dbReference>
<comment type="function">
    <text evidence="1">Catalyzes the conversion of acetate into acetyl-CoA (AcCoA), an essential intermediate at the junction of anabolic and catabolic pathways. AcsA undergoes a two-step reaction. In the first half reaction, AcsA combines acetate with ATP to form acetyl-adenylate (AcAMP) intermediate. In the second half reaction, it can then transfer the acetyl group from AcAMP to the sulfhydryl group of CoA, forming the product AcCoA.</text>
</comment>
<comment type="catalytic activity">
    <reaction evidence="1">
        <text>acetate + ATP + CoA = acetyl-CoA + AMP + diphosphate</text>
        <dbReference type="Rhea" id="RHEA:23176"/>
        <dbReference type="ChEBI" id="CHEBI:30089"/>
        <dbReference type="ChEBI" id="CHEBI:30616"/>
        <dbReference type="ChEBI" id="CHEBI:33019"/>
        <dbReference type="ChEBI" id="CHEBI:57287"/>
        <dbReference type="ChEBI" id="CHEBI:57288"/>
        <dbReference type="ChEBI" id="CHEBI:456215"/>
        <dbReference type="EC" id="6.2.1.1"/>
    </reaction>
</comment>
<comment type="cofactor">
    <cofactor evidence="1">
        <name>Mg(2+)</name>
        <dbReference type="ChEBI" id="CHEBI:18420"/>
    </cofactor>
</comment>
<comment type="PTM">
    <text evidence="1">Acetylated. Deacetylation by the SIR2-homolog deacetylase activates the enzyme.</text>
</comment>
<comment type="similarity">
    <text evidence="1">Belongs to the ATP-dependent AMP-binding enzyme family.</text>
</comment>
<reference key="1">
    <citation type="journal article" date="2010" name="Genome Biol. Evol.">
        <title>Continuing evolution of Burkholderia mallei through genome reduction and large-scale rearrangements.</title>
        <authorList>
            <person name="Losada L."/>
            <person name="Ronning C.M."/>
            <person name="DeShazer D."/>
            <person name="Woods D."/>
            <person name="Fedorova N."/>
            <person name="Kim H.S."/>
            <person name="Shabalina S.A."/>
            <person name="Pearson T.R."/>
            <person name="Brinkac L."/>
            <person name="Tan P."/>
            <person name="Nandi T."/>
            <person name="Crabtree J."/>
            <person name="Badger J."/>
            <person name="Beckstrom-Sternberg S."/>
            <person name="Saqib M."/>
            <person name="Schutzer S.E."/>
            <person name="Keim P."/>
            <person name="Nierman W.C."/>
        </authorList>
    </citation>
    <scope>NUCLEOTIDE SEQUENCE [LARGE SCALE GENOMIC DNA]</scope>
    <source>
        <strain>NCTC 10247</strain>
    </source>
</reference>
<feature type="chain" id="PRO_1000065277" description="Acetyl-coenzyme A synthetase">
    <location>
        <begin position="1"/>
        <end position="660"/>
    </location>
</feature>
<feature type="binding site" evidence="1">
    <location>
        <begin position="197"/>
        <end position="200"/>
    </location>
    <ligand>
        <name>CoA</name>
        <dbReference type="ChEBI" id="CHEBI:57287"/>
    </ligand>
</feature>
<feature type="binding site" evidence="1">
    <location>
        <position position="317"/>
    </location>
    <ligand>
        <name>CoA</name>
        <dbReference type="ChEBI" id="CHEBI:57287"/>
    </ligand>
</feature>
<feature type="binding site" evidence="1">
    <location>
        <begin position="397"/>
        <end position="399"/>
    </location>
    <ligand>
        <name>ATP</name>
        <dbReference type="ChEBI" id="CHEBI:30616"/>
    </ligand>
</feature>
<feature type="binding site" evidence="1">
    <location>
        <begin position="421"/>
        <end position="426"/>
    </location>
    <ligand>
        <name>ATP</name>
        <dbReference type="ChEBI" id="CHEBI:30616"/>
    </ligand>
</feature>
<feature type="binding site" evidence="1">
    <location>
        <position position="512"/>
    </location>
    <ligand>
        <name>ATP</name>
        <dbReference type="ChEBI" id="CHEBI:30616"/>
    </ligand>
</feature>
<feature type="binding site" evidence="1">
    <location>
        <position position="528"/>
    </location>
    <ligand>
        <name>ATP</name>
        <dbReference type="ChEBI" id="CHEBI:30616"/>
    </ligand>
</feature>
<feature type="binding site" evidence="1">
    <location>
        <position position="536"/>
    </location>
    <ligand>
        <name>CoA</name>
        <dbReference type="ChEBI" id="CHEBI:57287"/>
    </ligand>
</feature>
<feature type="binding site" evidence="1">
    <location>
        <position position="539"/>
    </location>
    <ligand>
        <name>ATP</name>
        <dbReference type="ChEBI" id="CHEBI:30616"/>
    </ligand>
</feature>
<feature type="binding site" evidence="1">
    <location>
        <position position="550"/>
    </location>
    <ligand>
        <name>Mg(2+)</name>
        <dbReference type="ChEBI" id="CHEBI:18420"/>
    </ligand>
</feature>
<feature type="binding site" evidence="1">
    <location>
        <position position="552"/>
    </location>
    <ligand>
        <name>Mg(2+)</name>
        <dbReference type="ChEBI" id="CHEBI:18420"/>
    </ligand>
</feature>
<feature type="binding site" evidence="1">
    <location>
        <position position="555"/>
    </location>
    <ligand>
        <name>Mg(2+)</name>
        <dbReference type="ChEBI" id="CHEBI:18420"/>
    </ligand>
</feature>
<feature type="modified residue" description="N6-acetyllysine" evidence="1">
    <location>
        <position position="625"/>
    </location>
</feature>
<proteinExistence type="inferred from homology"/>
<sequence length="660" mass="72282">MSAIESVLHERRQFAPPAAVEKAAAISGMAAYRALAEEAERDYEGFWARLARETLEWRKPFGKVLDETNAPFYKWFEDGELNASYNCLDRHVAAGLGERVAVIFEADDGTVTRVTYADLLARVSRFANALKKRGVGRGDRVVIYIPMSVEGIVAMQACARIGATHSVVFGGFSSKSLHERIVDVGATALVTADEQMRGGKTLPLKSIADEALAMGGCDAVKTVVVYRRTGGNVDWHAGRDVWMHEMVANESDACEPEWVGAEHPLFILYTSGSTGKPKGVQHSTAGYLLWVAQTMKWTFDWKPDDVFWCTADIGWVTGHSYITYGPLAVGATQVVFEGVPTYPNAGRFWKMIGDHKVTVFYTAPTAIRSLIKAAEADDRVHPRSYDLSSLRIIGTVGEPINPEAWIWYHKNVGQARCPIVDTWWQTETGGHMITPLPGATPTVPGSCTLPLPGIMAAVVDETGQDVPNGQGGILVVKRPWPAMARTIWGDPERFKKSYFPEELGGRLYLAGDGTVRDKETGYFTIMGRIDDVLNVSGHRLGTMEIESALVSHELVAEAAVVGRPDDTTGEAVVAFVVLKRSRPEGEEAAALAKTLRDWVGKEIGPIAKPKDIRFGDNLPKTRSGKIMRRLLRSLAKGEAITQDTSTLENPAILEQLAEVR</sequence>
<evidence type="ECO:0000255" key="1">
    <source>
        <dbReference type="HAMAP-Rule" id="MF_01123"/>
    </source>
</evidence>
<protein>
    <recommendedName>
        <fullName evidence="1">Acetyl-coenzyme A synthetase</fullName>
        <shortName evidence="1">AcCoA synthetase</shortName>
        <shortName evidence="1">Acs</shortName>
        <ecNumber evidence="1">6.2.1.1</ecNumber>
    </recommendedName>
    <alternativeName>
        <fullName evidence="1">Acetate--CoA ligase</fullName>
    </alternativeName>
    <alternativeName>
        <fullName evidence="1">Acyl-activating enzyme</fullName>
    </alternativeName>
</protein>
<accession>A3MG40</accession>
<gene>
    <name evidence="1" type="primary">acsA</name>
    <name type="ordered locus">BMA10247_A2054</name>
</gene>
<keyword id="KW-0007">Acetylation</keyword>
<keyword id="KW-0067">ATP-binding</keyword>
<keyword id="KW-0436">Ligase</keyword>
<keyword id="KW-0460">Magnesium</keyword>
<keyword id="KW-0479">Metal-binding</keyword>
<keyword id="KW-0547">Nucleotide-binding</keyword>
<organism>
    <name type="scientific">Burkholderia mallei (strain NCTC 10247)</name>
    <dbReference type="NCBI Taxonomy" id="320389"/>
    <lineage>
        <taxon>Bacteria</taxon>
        <taxon>Pseudomonadati</taxon>
        <taxon>Pseudomonadota</taxon>
        <taxon>Betaproteobacteria</taxon>
        <taxon>Burkholderiales</taxon>
        <taxon>Burkholderiaceae</taxon>
        <taxon>Burkholderia</taxon>
        <taxon>pseudomallei group</taxon>
    </lineage>
</organism>
<name>ACSA_BURM7</name>